<evidence type="ECO:0000255" key="1"/>
<evidence type="ECO:0000255" key="2">
    <source>
        <dbReference type="PROSITE-ProRule" id="PRU00159"/>
    </source>
</evidence>
<evidence type="ECO:0000255" key="3">
    <source>
        <dbReference type="PROSITE-ProRule" id="PRU10027"/>
    </source>
</evidence>
<evidence type="ECO:0000269" key="4">
    <source>
    </source>
</evidence>
<evidence type="ECO:0000269" key="5">
    <source>
    </source>
</evidence>
<evidence type="ECO:0000269" key="6">
    <source>
    </source>
</evidence>
<evidence type="ECO:0000303" key="7">
    <source>
    </source>
</evidence>
<evidence type="ECO:0000305" key="8"/>
<evidence type="ECO:0000312" key="9">
    <source>
        <dbReference type="PomBase" id="SPAC23A1.06c"/>
    </source>
</evidence>
<comment type="function">
    <text evidence="4 5">Has a role in the regulation of G2/M transition during the mitotic cell cycle.</text>
</comment>
<comment type="catalytic activity">
    <reaction evidence="4">
        <text>L-seryl-[protein] + ATP = O-phospho-L-seryl-[protein] + ADP + H(+)</text>
        <dbReference type="Rhea" id="RHEA:17989"/>
        <dbReference type="Rhea" id="RHEA-COMP:9863"/>
        <dbReference type="Rhea" id="RHEA-COMP:11604"/>
        <dbReference type="ChEBI" id="CHEBI:15378"/>
        <dbReference type="ChEBI" id="CHEBI:29999"/>
        <dbReference type="ChEBI" id="CHEBI:30616"/>
        <dbReference type="ChEBI" id="CHEBI:83421"/>
        <dbReference type="ChEBI" id="CHEBI:456216"/>
        <dbReference type="EC" id="2.7.11.17"/>
    </reaction>
</comment>
<comment type="catalytic activity">
    <reaction evidence="4">
        <text>L-threonyl-[protein] + ATP = O-phospho-L-threonyl-[protein] + ADP + H(+)</text>
        <dbReference type="Rhea" id="RHEA:46608"/>
        <dbReference type="Rhea" id="RHEA-COMP:11060"/>
        <dbReference type="Rhea" id="RHEA-COMP:11605"/>
        <dbReference type="ChEBI" id="CHEBI:15378"/>
        <dbReference type="ChEBI" id="CHEBI:30013"/>
        <dbReference type="ChEBI" id="CHEBI:30616"/>
        <dbReference type="ChEBI" id="CHEBI:61977"/>
        <dbReference type="ChEBI" id="CHEBI:456216"/>
        <dbReference type="EC" id="2.7.11.17"/>
    </reaction>
</comment>
<comment type="cofactor">
    <cofactor evidence="4">
        <name>Mg(2+)</name>
        <dbReference type="ChEBI" id="CHEBI:18420"/>
    </cofactor>
</comment>
<comment type="subunit">
    <text evidence="5">Interacts with sty1.</text>
</comment>
<comment type="subcellular location">
    <subcellularLocation>
        <location evidence="4 5">Cytoplasm</location>
    </subcellularLocation>
    <subcellularLocation>
        <location evidence="5">Barrier septum</location>
    </subcellularLocation>
    <subcellularLocation>
        <location evidence="5">Forespore membrane</location>
    </subcellularLocation>
    <subcellularLocation>
        <location evidence="5">Ascus epiplasm</location>
    </subcellularLocation>
</comment>
<comment type="PTM">
    <text evidence="4 6">Autophosphorylated.</text>
</comment>
<comment type="similarity">
    <text evidence="8">Belongs to the protein kinase superfamily. CAMK Ser/Thr protein kinase family. CaMK subfamily.</text>
</comment>
<gene>
    <name evidence="7 9" type="primary">cmk2</name>
    <name evidence="9" type="ORF">SPAC23A1.06c</name>
</gene>
<reference key="1">
    <citation type="journal article" date="2002" name="Nature">
        <title>The genome sequence of Schizosaccharomyces pombe.</title>
        <authorList>
            <person name="Wood V."/>
            <person name="Gwilliam R."/>
            <person name="Rajandream M.A."/>
            <person name="Lyne M.H."/>
            <person name="Lyne R."/>
            <person name="Stewart A."/>
            <person name="Sgouros J.G."/>
            <person name="Peat N."/>
            <person name="Hayles J."/>
            <person name="Baker S.G."/>
            <person name="Basham D."/>
            <person name="Bowman S."/>
            <person name="Brooks K."/>
            <person name="Brown D."/>
            <person name="Brown S."/>
            <person name="Chillingworth T."/>
            <person name="Churcher C.M."/>
            <person name="Collins M."/>
            <person name="Connor R."/>
            <person name="Cronin A."/>
            <person name="Davis P."/>
            <person name="Feltwell T."/>
            <person name="Fraser A."/>
            <person name="Gentles S."/>
            <person name="Goble A."/>
            <person name="Hamlin N."/>
            <person name="Harris D.E."/>
            <person name="Hidalgo J."/>
            <person name="Hodgson G."/>
            <person name="Holroyd S."/>
            <person name="Hornsby T."/>
            <person name="Howarth S."/>
            <person name="Huckle E.J."/>
            <person name="Hunt S."/>
            <person name="Jagels K."/>
            <person name="James K.D."/>
            <person name="Jones L."/>
            <person name="Jones M."/>
            <person name="Leather S."/>
            <person name="McDonald S."/>
            <person name="McLean J."/>
            <person name="Mooney P."/>
            <person name="Moule S."/>
            <person name="Mungall K.L."/>
            <person name="Murphy L.D."/>
            <person name="Niblett D."/>
            <person name="Odell C."/>
            <person name="Oliver K."/>
            <person name="O'Neil S."/>
            <person name="Pearson D."/>
            <person name="Quail M.A."/>
            <person name="Rabbinowitsch E."/>
            <person name="Rutherford K.M."/>
            <person name="Rutter S."/>
            <person name="Saunders D."/>
            <person name="Seeger K."/>
            <person name="Sharp S."/>
            <person name="Skelton J."/>
            <person name="Simmonds M.N."/>
            <person name="Squares R."/>
            <person name="Squares S."/>
            <person name="Stevens K."/>
            <person name="Taylor K."/>
            <person name="Taylor R.G."/>
            <person name="Tivey A."/>
            <person name="Walsh S.V."/>
            <person name="Warren T."/>
            <person name="Whitehead S."/>
            <person name="Woodward J.R."/>
            <person name="Volckaert G."/>
            <person name="Aert R."/>
            <person name="Robben J."/>
            <person name="Grymonprez B."/>
            <person name="Weltjens I."/>
            <person name="Vanstreels E."/>
            <person name="Rieger M."/>
            <person name="Schaefer M."/>
            <person name="Mueller-Auer S."/>
            <person name="Gabel C."/>
            <person name="Fuchs M."/>
            <person name="Duesterhoeft A."/>
            <person name="Fritzc C."/>
            <person name="Holzer E."/>
            <person name="Moestl D."/>
            <person name="Hilbert H."/>
            <person name="Borzym K."/>
            <person name="Langer I."/>
            <person name="Beck A."/>
            <person name="Lehrach H."/>
            <person name="Reinhardt R."/>
            <person name="Pohl T.M."/>
            <person name="Eger P."/>
            <person name="Zimmermann W."/>
            <person name="Wedler H."/>
            <person name="Wambutt R."/>
            <person name="Purnelle B."/>
            <person name="Goffeau A."/>
            <person name="Cadieu E."/>
            <person name="Dreano S."/>
            <person name="Gloux S."/>
            <person name="Lelaure V."/>
            <person name="Mottier S."/>
            <person name="Galibert F."/>
            <person name="Aves S.J."/>
            <person name="Xiang Z."/>
            <person name="Hunt C."/>
            <person name="Moore K."/>
            <person name="Hurst S.M."/>
            <person name="Lucas M."/>
            <person name="Rochet M."/>
            <person name="Gaillardin C."/>
            <person name="Tallada V.A."/>
            <person name="Garzon A."/>
            <person name="Thode G."/>
            <person name="Daga R.R."/>
            <person name="Cruzado L."/>
            <person name="Jimenez J."/>
            <person name="Sanchez M."/>
            <person name="del Rey F."/>
            <person name="Benito J."/>
            <person name="Dominguez A."/>
            <person name="Revuelta J.L."/>
            <person name="Moreno S."/>
            <person name="Armstrong J."/>
            <person name="Forsburg S.L."/>
            <person name="Cerutti L."/>
            <person name="Lowe T."/>
            <person name="McCombie W.R."/>
            <person name="Paulsen I."/>
            <person name="Potashkin J."/>
            <person name="Shpakovski G.V."/>
            <person name="Ussery D."/>
            <person name="Barrell B.G."/>
            <person name="Nurse P."/>
        </authorList>
    </citation>
    <scope>NUCLEOTIDE SEQUENCE [LARGE SCALE GENOMIC DNA]</scope>
    <source>
        <strain>972 / ATCC 24843</strain>
    </source>
</reference>
<reference key="2">
    <citation type="journal article" date="2002" name="FEBS Lett.">
        <title>Cmk2, a novel serine/threonine kinase in fission yeast.</title>
        <authorList>
            <person name="Alemany V."/>
            <person name="Sanchez-Piris M."/>
            <person name="Bachs O."/>
            <person name="Aligue R."/>
        </authorList>
    </citation>
    <scope>FUNCTION</scope>
    <scope>CATALYTIC ACTIVITY</scope>
    <scope>COFACTOR</scope>
    <scope>SUBCELLULAR LOCATION</scope>
    <scope>PHOSPHORYLATION</scope>
</reference>
<reference key="3">
    <citation type="journal article" date="2003" name="Mol. Genet. Genomics">
        <title>Mkp1 and Mkp2, two MAPKAP-kinase homologues in Schizosaccharomyces pombe, interact with the MAP kinase Sty1.</title>
        <authorList>
            <person name="Asp E."/>
            <person name="Sunnerhagen P."/>
        </authorList>
    </citation>
    <scope>FUNCTION</scope>
    <scope>SUBCELLULAR LOCATION</scope>
    <scope>INTERACTION WITH STY1</scope>
</reference>
<reference key="4">
    <citation type="journal article" date="2008" name="J. Proteome Res.">
        <title>Phosphoproteome analysis of fission yeast.</title>
        <authorList>
            <person name="Wilson-Grady J.T."/>
            <person name="Villen J."/>
            <person name="Gygi S.P."/>
        </authorList>
    </citation>
    <scope>PHOSPHORYLATION [LARGE SCALE ANALYSIS] AT THR-252</scope>
    <scope>IDENTIFICATION BY MASS SPECTROMETRY</scope>
</reference>
<feature type="chain" id="PRO_0000086104" description="Calcium/calmodulin-dependent protein kinase type II">
    <location>
        <begin position="1"/>
        <end position="504"/>
    </location>
</feature>
<feature type="domain" description="Protein kinase" evidence="2">
    <location>
        <begin position="65"/>
        <end position="351"/>
    </location>
</feature>
<feature type="region of interest" description="Calmodulin-binding" evidence="1">
    <location>
        <begin position="366"/>
        <end status="unknown"/>
    </location>
</feature>
<feature type="active site" description="Proton acceptor" evidence="2 3">
    <location>
        <position position="188"/>
    </location>
</feature>
<feature type="binding site" evidence="2">
    <location>
        <begin position="71"/>
        <end position="79"/>
    </location>
    <ligand>
        <name>ATP</name>
        <dbReference type="ChEBI" id="CHEBI:30616"/>
    </ligand>
</feature>
<feature type="binding site" evidence="2">
    <location>
        <position position="94"/>
    </location>
    <ligand>
        <name>ATP</name>
        <dbReference type="ChEBI" id="CHEBI:30616"/>
    </ligand>
</feature>
<feature type="modified residue" description="Phosphothreonine" evidence="6">
    <location>
        <position position="252"/>
    </location>
</feature>
<protein>
    <recommendedName>
        <fullName>Calcium/calmodulin-dependent protein kinase type II</fullName>
        <shortName>CAM kinase II</shortName>
        <ecNumber evidence="4">2.7.11.17</ecNumber>
    </recommendedName>
</protein>
<accession>O42844</accession>
<name>KCC2_SCHPO</name>
<keyword id="KW-0067">ATP-binding</keyword>
<keyword id="KW-0112">Calmodulin-binding</keyword>
<keyword id="KW-0963">Cytoplasm</keyword>
<keyword id="KW-0418">Kinase</keyword>
<keyword id="KW-0472">Membrane</keyword>
<keyword id="KW-0547">Nucleotide-binding</keyword>
<keyword id="KW-0597">Phosphoprotein</keyword>
<keyword id="KW-1185">Reference proteome</keyword>
<keyword id="KW-0723">Serine/threonine-protein kinase</keyword>
<keyword id="KW-0808">Transferase</keyword>
<proteinExistence type="evidence at protein level"/>
<sequence length="504" mass="56609">MSILAGFKNLLKHSKSSKGRSNASKSVDVSVNRDVAAYTELAAKNVNAGGDEEIRVANYPGLEKYQLIENLGDGAFSQVYKAYSIDRKEHVAVKVIRKYEMNKKQRQGVFKEVNIMRRVKHKNVVNLFDFVETEDFYHLVMELAEGGELFHQIVNFTYFSENLARHIIIQVAEAVKHLHDVCGIVHRDIKPENLLFQPIEYLPSQNYTPPSLEPNKLDEGMFLEGIGAGGIGRILIADFGFSKVVWNSKTATPCGTVGYAAPEIVNDELYSKNVDMWAMGCVLHTMLCGFPPFFDENIKDLASKVVNGEFEFLSPWWDDISDSAKDLITHLLTVDPRERYDIHQFFQHPWIKGESKMPENFTYKPKLHGTPGGPKLSLPRSLVSKGEIDIPTTPIKSATHPLLSSYSEPKTPGVSSVHEAMGVAYDIRRLNHLGFSPEQLSKKSMNTGSIKELILDEETTTDDDDYIISSFPLNDTLGSEGKDPFSLNLKESSLYSRRSAKRVN</sequence>
<organism>
    <name type="scientific">Schizosaccharomyces pombe (strain 972 / ATCC 24843)</name>
    <name type="common">Fission yeast</name>
    <dbReference type="NCBI Taxonomy" id="284812"/>
    <lineage>
        <taxon>Eukaryota</taxon>
        <taxon>Fungi</taxon>
        <taxon>Dikarya</taxon>
        <taxon>Ascomycota</taxon>
        <taxon>Taphrinomycotina</taxon>
        <taxon>Schizosaccharomycetes</taxon>
        <taxon>Schizosaccharomycetales</taxon>
        <taxon>Schizosaccharomycetaceae</taxon>
        <taxon>Schizosaccharomyces</taxon>
    </lineage>
</organism>
<dbReference type="EC" id="2.7.11.17" evidence="4"/>
<dbReference type="EMBL" id="CU329670">
    <property type="protein sequence ID" value="CAA16980.1"/>
    <property type="molecule type" value="Genomic_DNA"/>
</dbReference>
<dbReference type="PIR" id="T38226">
    <property type="entry name" value="T38226"/>
</dbReference>
<dbReference type="RefSeq" id="NP_594436.1">
    <property type="nucleotide sequence ID" value="NM_001019865.2"/>
</dbReference>
<dbReference type="SMR" id="O42844"/>
<dbReference type="BioGRID" id="278467">
    <property type="interactions" value="35"/>
</dbReference>
<dbReference type="FunCoup" id="O42844">
    <property type="interactions" value="407"/>
</dbReference>
<dbReference type="STRING" id="284812.O42844"/>
<dbReference type="iPTMnet" id="O42844"/>
<dbReference type="PaxDb" id="4896-SPAC23A1.06c.1"/>
<dbReference type="EnsemblFungi" id="SPAC23A1.06c.1">
    <property type="protein sequence ID" value="SPAC23A1.06c.1:pep"/>
    <property type="gene ID" value="SPAC23A1.06c"/>
</dbReference>
<dbReference type="GeneID" id="2541982"/>
<dbReference type="KEGG" id="spo:2541982"/>
<dbReference type="PomBase" id="SPAC23A1.06c">
    <property type="gene designation" value="cmk2"/>
</dbReference>
<dbReference type="VEuPathDB" id="FungiDB:SPAC23A1.06c"/>
<dbReference type="eggNOG" id="KOG0032">
    <property type="taxonomic scope" value="Eukaryota"/>
</dbReference>
<dbReference type="HOGENOM" id="CLU_006421_3_2_1"/>
<dbReference type="InParanoid" id="O42844"/>
<dbReference type="OMA" id="HTMLCGF"/>
<dbReference type="PhylomeDB" id="O42844"/>
<dbReference type="PRO" id="PR:O42844"/>
<dbReference type="Proteomes" id="UP000002485">
    <property type="component" value="Chromosome I"/>
</dbReference>
<dbReference type="GO" id="GO:0072324">
    <property type="term" value="C:ascus epiplasm"/>
    <property type="evidence" value="ECO:0000314"/>
    <property type="project" value="PomBase"/>
</dbReference>
<dbReference type="GO" id="GO:0005938">
    <property type="term" value="C:cell cortex"/>
    <property type="evidence" value="ECO:0000314"/>
    <property type="project" value="PomBase"/>
</dbReference>
<dbReference type="GO" id="GO:0051285">
    <property type="term" value="C:cell cortex of cell tip"/>
    <property type="evidence" value="ECO:0000314"/>
    <property type="project" value="PomBase"/>
</dbReference>
<dbReference type="GO" id="GO:0005737">
    <property type="term" value="C:cytoplasm"/>
    <property type="evidence" value="ECO:0000314"/>
    <property type="project" value="PomBase"/>
</dbReference>
<dbReference type="GO" id="GO:0000935">
    <property type="term" value="C:division septum"/>
    <property type="evidence" value="ECO:0000314"/>
    <property type="project" value="PomBase"/>
</dbReference>
<dbReference type="GO" id="GO:0005634">
    <property type="term" value="C:nucleus"/>
    <property type="evidence" value="ECO:0000318"/>
    <property type="project" value="GO_Central"/>
</dbReference>
<dbReference type="GO" id="GO:0005628">
    <property type="term" value="C:prospore membrane"/>
    <property type="evidence" value="ECO:0000314"/>
    <property type="project" value="PomBase"/>
</dbReference>
<dbReference type="GO" id="GO:0005524">
    <property type="term" value="F:ATP binding"/>
    <property type="evidence" value="ECO:0007669"/>
    <property type="project" value="UniProtKB-KW"/>
</dbReference>
<dbReference type="GO" id="GO:0004683">
    <property type="term" value="F:calcium/calmodulin-dependent protein kinase activity"/>
    <property type="evidence" value="ECO:0007669"/>
    <property type="project" value="UniProtKB-EC"/>
</dbReference>
<dbReference type="GO" id="GO:0005516">
    <property type="term" value="F:calmodulin binding"/>
    <property type="evidence" value="ECO:0007669"/>
    <property type="project" value="UniProtKB-KW"/>
</dbReference>
<dbReference type="GO" id="GO:0004672">
    <property type="term" value="F:protein kinase activity"/>
    <property type="evidence" value="ECO:0000314"/>
    <property type="project" value="PomBase"/>
</dbReference>
<dbReference type="GO" id="GO:0106310">
    <property type="term" value="F:protein serine kinase activity"/>
    <property type="evidence" value="ECO:0007669"/>
    <property type="project" value="RHEA"/>
</dbReference>
<dbReference type="GO" id="GO:0004674">
    <property type="term" value="F:protein serine/threonine kinase activity"/>
    <property type="evidence" value="ECO:0000318"/>
    <property type="project" value="GO_Central"/>
</dbReference>
<dbReference type="GO" id="GO:0034599">
    <property type="term" value="P:cellular response to oxidative stress"/>
    <property type="evidence" value="ECO:0000315"/>
    <property type="project" value="PomBase"/>
</dbReference>
<dbReference type="GO" id="GO:0044773">
    <property type="term" value="P:mitotic DNA damage checkpoint signaling"/>
    <property type="evidence" value="ECO:0000318"/>
    <property type="project" value="GO_Central"/>
</dbReference>
<dbReference type="GO" id="GO:0010972">
    <property type="term" value="P:negative regulation of G2/M transition of mitotic cell cycle"/>
    <property type="evidence" value="ECO:0000315"/>
    <property type="project" value="PomBase"/>
</dbReference>
<dbReference type="FunFam" id="3.30.200.20:FF:001875">
    <property type="entry name" value="Calcium/calmodulin-dependent protein kinase type II"/>
    <property type="match status" value="1"/>
</dbReference>
<dbReference type="Gene3D" id="3.30.200.20">
    <property type="entry name" value="Phosphorylase Kinase, domain 1"/>
    <property type="match status" value="1"/>
</dbReference>
<dbReference type="Gene3D" id="1.10.510.10">
    <property type="entry name" value="Transferase(Phosphotransferase) domain 1"/>
    <property type="match status" value="1"/>
</dbReference>
<dbReference type="InterPro" id="IPR011009">
    <property type="entry name" value="Kinase-like_dom_sf"/>
</dbReference>
<dbReference type="InterPro" id="IPR000719">
    <property type="entry name" value="Prot_kinase_dom"/>
</dbReference>
<dbReference type="InterPro" id="IPR017441">
    <property type="entry name" value="Protein_kinase_ATP_BS"/>
</dbReference>
<dbReference type="InterPro" id="IPR008271">
    <property type="entry name" value="Ser/Thr_kinase_AS"/>
</dbReference>
<dbReference type="PANTHER" id="PTHR24347">
    <property type="entry name" value="SERINE/THREONINE-PROTEIN KINASE"/>
    <property type="match status" value="1"/>
</dbReference>
<dbReference type="Pfam" id="PF00069">
    <property type="entry name" value="Pkinase"/>
    <property type="match status" value="1"/>
</dbReference>
<dbReference type="SMART" id="SM00220">
    <property type="entry name" value="S_TKc"/>
    <property type="match status" value="1"/>
</dbReference>
<dbReference type="SUPFAM" id="SSF56112">
    <property type="entry name" value="Protein kinase-like (PK-like)"/>
    <property type="match status" value="1"/>
</dbReference>
<dbReference type="PROSITE" id="PS00107">
    <property type="entry name" value="PROTEIN_KINASE_ATP"/>
    <property type="match status" value="1"/>
</dbReference>
<dbReference type="PROSITE" id="PS50011">
    <property type="entry name" value="PROTEIN_KINASE_DOM"/>
    <property type="match status" value="1"/>
</dbReference>
<dbReference type="PROSITE" id="PS00108">
    <property type="entry name" value="PROTEIN_KINASE_ST"/>
    <property type="match status" value="1"/>
</dbReference>